<evidence type="ECO:0000269" key="1">
    <source>
    </source>
</evidence>
<evidence type="ECO:0000303" key="2">
    <source>
    </source>
</evidence>
<evidence type="ECO:0000305" key="3"/>
<organism>
    <name type="scientific">Nicotiana tabacum</name>
    <name type="common">Common tobacco</name>
    <dbReference type="NCBI Taxonomy" id="4097"/>
    <lineage>
        <taxon>Eukaryota</taxon>
        <taxon>Viridiplantae</taxon>
        <taxon>Streptophyta</taxon>
        <taxon>Embryophyta</taxon>
        <taxon>Tracheophyta</taxon>
        <taxon>Spermatophyta</taxon>
        <taxon>Magnoliopsida</taxon>
        <taxon>eudicotyledons</taxon>
        <taxon>Gunneridae</taxon>
        <taxon>Pentapetalae</taxon>
        <taxon>asterids</taxon>
        <taxon>lamiids</taxon>
        <taxon>Solanales</taxon>
        <taxon>Solanaceae</taxon>
        <taxon>Nicotianoideae</taxon>
        <taxon>Nicotianeae</taxon>
        <taxon>Nicotiana</taxon>
    </lineage>
</organism>
<dbReference type="PaxDb" id="4097-P80786"/>
<dbReference type="Proteomes" id="UP000084051">
    <property type="component" value="Unplaced"/>
</dbReference>
<dbReference type="GO" id="GO:0005576">
    <property type="term" value="C:extracellular region"/>
    <property type="evidence" value="ECO:0007669"/>
    <property type="project" value="UniProtKB-KW"/>
</dbReference>
<proteinExistence type="evidence at protein level"/>
<reference evidence="3" key="1">
    <citation type="journal article" date="1997" name="J. Biol. Chem.">
        <title>Differential extraction and protein sequencing reveals major differences in patterns of primary cell wall proteins from plants.</title>
        <authorList>
            <person name="Robertson D."/>
            <person name="Mitchell G.P."/>
            <person name="Gilroy J.S."/>
            <person name="Gerrish C."/>
            <person name="Bolwell G.P."/>
            <person name="Slabas A.R."/>
        </authorList>
    </citation>
    <scope>PROTEIN SEQUENCE</scope>
    <scope>SUBCELLULAR LOCATION</scope>
</reference>
<protein>
    <recommendedName>
        <fullName>50 kDa cell wall protein</fullName>
    </recommendedName>
</protein>
<accession>P80786</accession>
<keyword id="KW-0134">Cell wall</keyword>
<keyword id="KW-0903">Direct protein sequencing</keyword>
<keyword id="KW-1185">Reference proteome</keyword>
<keyword id="KW-0964">Secreted</keyword>
<feature type="chain" id="PRO_0000079657" description="50 kDa cell wall protein">
    <location>
        <begin position="1"/>
        <end position="22" status="greater than"/>
    </location>
</feature>
<feature type="non-terminal residue" evidence="2">
    <location>
        <position position="22"/>
    </location>
</feature>
<sequence>FYAGLILTLVNTFPYNISPASS</sequence>
<name>CWP09_TOBAC</name>
<comment type="subcellular location">
    <subcellularLocation>
        <location evidence="1">Secreted</location>
        <location evidence="1">Cell wall</location>
    </subcellularLocation>
</comment>